<evidence type="ECO:0000255" key="1">
    <source>
        <dbReference type="HAMAP-Rule" id="MF_00361"/>
    </source>
</evidence>
<accession>P58057</accession>
<gene>
    <name evidence="1" type="primary">nadK</name>
    <name type="ordered locus">Z3908</name>
    <name type="ordered locus">ECs3477</name>
</gene>
<feature type="chain" id="PRO_0000120618" description="NAD kinase">
    <location>
        <begin position="1"/>
        <end position="292"/>
    </location>
</feature>
<feature type="active site" description="Proton acceptor" evidence="1">
    <location>
        <position position="73"/>
    </location>
</feature>
<feature type="binding site" evidence="1">
    <location>
        <begin position="73"/>
        <end position="74"/>
    </location>
    <ligand>
        <name>NAD(+)</name>
        <dbReference type="ChEBI" id="CHEBI:57540"/>
    </ligand>
</feature>
<feature type="binding site" evidence="1">
    <location>
        <begin position="147"/>
        <end position="148"/>
    </location>
    <ligand>
        <name>NAD(+)</name>
        <dbReference type="ChEBI" id="CHEBI:57540"/>
    </ligand>
</feature>
<feature type="binding site" evidence="1">
    <location>
        <position position="158"/>
    </location>
    <ligand>
        <name>NAD(+)</name>
        <dbReference type="ChEBI" id="CHEBI:57540"/>
    </ligand>
</feature>
<feature type="binding site" evidence="1">
    <location>
        <position position="175"/>
    </location>
    <ligand>
        <name>NAD(+)</name>
        <dbReference type="ChEBI" id="CHEBI:57540"/>
    </ligand>
</feature>
<feature type="binding site" evidence="1">
    <location>
        <position position="177"/>
    </location>
    <ligand>
        <name>NAD(+)</name>
        <dbReference type="ChEBI" id="CHEBI:57540"/>
    </ligand>
</feature>
<feature type="binding site" evidence="1">
    <location>
        <begin position="188"/>
        <end position="193"/>
    </location>
    <ligand>
        <name>NAD(+)</name>
        <dbReference type="ChEBI" id="CHEBI:57540"/>
    </ligand>
</feature>
<feature type="binding site" evidence="1">
    <location>
        <position position="247"/>
    </location>
    <ligand>
        <name>NAD(+)</name>
        <dbReference type="ChEBI" id="CHEBI:57540"/>
    </ligand>
</feature>
<proteinExistence type="inferred from homology"/>
<sequence>MNNHFKCIGIVGHPRHPTALTTHEMLYRWLCTKGYEVIVEQQIAHELQLKNVKTGTLAEIGQLADLAVVVGGDGNMLGATRTLARYDIKVIGINRGNLGFLTDLDPDNAQQQLADVLEGHYISEKRFLLEAQVCQQDCQKRISTAINEVVLHPGKVAHMIEFEVYIDEIFAFSQRSDGLIISTPTGSTAYSLSAGGPILTPSLDAITLVPMFPHTLSARPLVINSSSTIRLRFSHRRNDLEISCDSQIALPIQEGEDVLIRRCDYHLNLIHPKDYSYFNTLSTKLGWSKKLF</sequence>
<organism>
    <name type="scientific">Escherichia coli O157:H7</name>
    <dbReference type="NCBI Taxonomy" id="83334"/>
    <lineage>
        <taxon>Bacteria</taxon>
        <taxon>Pseudomonadati</taxon>
        <taxon>Pseudomonadota</taxon>
        <taxon>Gammaproteobacteria</taxon>
        <taxon>Enterobacterales</taxon>
        <taxon>Enterobacteriaceae</taxon>
        <taxon>Escherichia</taxon>
    </lineage>
</organism>
<keyword id="KW-0067">ATP-binding</keyword>
<keyword id="KW-0963">Cytoplasm</keyword>
<keyword id="KW-0418">Kinase</keyword>
<keyword id="KW-0520">NAD</keyword>
<keyword id="KW-0521">NADP</keyword>
<keyword id="KW-0547">Nucleotide-binding</keyword>
<keyword id="KW-1185">Reference proteome</keyword>
<keyword id="KW-0808">Transferase</keyword>
<protein>
    <recommendedName>
        <fullName evidence="1">NAD kinase</fullName>
        <ecNumber evidence="1">2.7.1.23</ecNumber>
    </recommendedName>
    <alternativeName>
        <fullName evidence="1">ATP-dependent NAD kinase</fullName>
    </alternativeName>
</protein>
<name>NADK_ECO57</name>
<comment type="function">
    <text evidence="1">Involved in the regulation of the intracellular balance of NAD and NADP, and is a key enzyme in the biosynthesis of NADP. Catalyzes specifically the phosphorylation on 2'-hydroxyl of the adenosine moiety of NAD to yield NADP.</text>
</comment>
<comment type="catalytic activity">
    <reaction evidence="1">
        <text>NAD(+) + ATP = ADP + NADP(+) + H(+)</text>
        <dbReference type="Rhea" id="RHEA:18629"/>
        <dbReference type="ChEBI" id="CHEBI:15378"/>
        <dbReference type="ChEBI" id="CHEBI:30616"/>
        <dbReference type="ChEBI" id="CHEBI:57540"/>
        <dbReference type="ChEBI" id="CHEBI:58349"/>
        <dbReference type="ChEBI" id="CHEBI:456216"/>
        <dbReference type="EC" id="2.7.1.23"/>
    </reaction>
</comment>
<comment type="cofactor">
    <cofactor evidence="1">
        <name>a divalent metal cation</name>
        <dbReference type="ChEBI" id="CHEBI:60240"/>
    </cofactor>
</comment>
<comment type="subcellular location">
    <subcellularLocation>
        <location evidence="1">Cytoplasm</location>
    </subcellularLocation>
</comment>
<comment type="similarity">
    <text evidence="1">Belongs to the NAD kinase family.</text>
</comment>
<reference key="1">
    <citation type="journal article" date="2001" name="Nature">
        <title>Genome sequence of enterohaemorrhagic Escherichia coli O157:H7.</title>
        <authorList>
            <person name="Perna N.T."/>
            <person name="Plunkett G. III"/>
            <person name="Burland V."/>
            <person name="Mau B."/>
            <person name="Glasner J.D."/>
            <person name="Rose D.J."/>
            <person name="Mayhew G.F."/>
            <person name="Evans P.S."/>
            <person name="Gregor J."/>
            <person name="Kirkpatrick H.A."/>
            <person name="Posfai G."/>
            <person name="Hackett J."/>
            <person name="Klink S."/>
            <person name="Boutin A."/>
            <person name="Shao Y."/>
            <person name="Miller L."/>
            <person name="Grotbeck E.J."/>
            <person name="Davis N.W."/>
            <person name="Lim A."/>
            <person name="Dimalanta E.T."/>
            <person name="Potamousis K."/>
            <person name="Apodaca J."/>
            <person name="Anantharaman T.S."/>
            <person name="Lin J."/>
            <person name="Yen G."/>
            <person name="Schwartz D.C."/>
            <person name="Welch R.A."/>
            <person name="Blattner F.R."/>
        </authorList>
    </citation>
    <scope>NUCLEOTIDE SEQUENCE [LARGE SCALE GENOMIC DNA]</scope>
    <source>
        <strain>O157:H7 / EDL933 / ATCC 700927 / EHEC</strain>
    </source>
</reference>
<reference key="2">
    <citation type="journal article" date="2001" name="DNA Res.">
        <title>Complete genome sequence of enterohemorrhagic Escherichia coli O157:H7 and genomic comparison with a laboratory strain K-12.</title>
        <authorList>
            <person name="Hayashi T."/>
            <person name="Makino K."/>
            <person name="Ohnishi M."/>
            <person name="Kurokawa K."/>
            <person name="Ishii K."/>
            <person name="Yokoyama K."/>
            <person name="Han C.-G."/>
            <person name="Ohtsubo E."/>
            <person name="Nakayama K."/>
            <person name="Murata T."/>
            <person name="Tanaka M."/>
            <person name="Tobe T."/>
            <person name="Iida T."/>
            <person name="Takami H."/>
            <person name="Honda T."/>
            <person name="Sasakawa C."/>
            <person name="Ogasawara N."/>
            <person name="Yasunaga T."/>
            <person name="Kuhara S."/>
            <person name="Shiba T."/>
            <person name="Hattori M."/>
            <person name="Shinagawa H."/>
        </authorList>
    </citation>
    <scope>NUCLEOTIDE SEQUENCE [LARGE SCALE GENOMIC DNA]</scope>
    <source>
        <strain>O157:H7 / Sakai / RIMD 0509952 / EHEC</strain>
    </source>
</reference>
<dbReference type="EC" id="2.7.1.23" evidence="1"/>
<dbReference type="EMBL" id="AE005174">
    <property type="protein sequence ID" value="AAG57725.1"/>
    <property type="molecule type" value="Genomic_DNA"/>
</dbReference>
<dbReference type="EMBL" id="BA000007">
    <property type="protein sequence ID" value="BAB36900.1"/>
    <property type="molecule type" value="Genomic_DNA"/>
</dbReference>
<dbReference type="PIR" id="A85908">
    <property type="entry name" value="A85908"/>
</dbReference>
<dbReference type="PIR" id="E91063">
    <property type="entry name" value="E91063"/>
</dbReference>
<dbReference type="RefSeq" id="NP_311504.1">
    <property type="nucleotide sequence ID" value="NC_002695.1"/>
</dbReference>
<dbReference type="RefSeq" id="WP_001059175.1">
    <property type="nucleotide sequence ID" value="NZ_VOAI01000040.1"/>
</dbReference>
<dbReference type="SMR" id="P58057"/>
<dbReference type="STRING" id="155864.Z3908"/>
<dbReference type="GeneID" id="914811"/>
<dbReference type="KEGG" id="ece:Z3908"/>
<dbReference type="KEGG" id="ecs:ECs_3477"/>
<dbReference type="PATRIC" id="fig|386585.9.peg.3632"/>
<dbReference type="eggNOG" id="COG0061">
    <property type="taxonomic scope" value="Bacteria"/>
</dbReference>
<dbReference type="HOGENOM" id="CLU_008831_0_1_6"/>
<dbReference type="OMA" id="SMCHFEI"/>
<dbReference type="Proteomes" id="UP000000558">
    <property type="component" value="Chromosome"/>
</dbReference>
<dbReference type="Proteomes" id="UP000002519">
    <property type="component" value="Chromosome"/>
</dbReference>
<dbReference type="GO" id="GO:0005737">
    <property type="term" value="C:cytoplasm"/>
    <property type="evidence" value="ECO:0007669"/>
    <property type="project" value="UniProtKB-SubCell"/>
</dbReference>
<dbReference type="GO" id="GO:0005524">
    <property type="term" value="F:ATP binding"/>
    <property type="evidence" value="ECO:0007669"/>
    <property type="project" value="UniProtKB-KW"/>
</dbReference>
<dbReference type="GO" id="GO:0046872">
    <property type="term" value="F:metal ion binding"/>
    <property type="evidence" value="ECO:0007669"/>
    <property type="project" value="UniProtKB-UniRule"/>
</dbReference>
<dbReference type="GO" id="GO:0051287">
    <property type="term" value="F:NAD binding"/>
    <property type="evidence" value="ECO:0007669"/>
    <property type="project" value="UniProtKB-ARBA"/>
</dbReference>
<dbReference type="GO" id="GO:0003951">
    <property type="term" value="F:NAD+ kinase activity"/>
    <property type="evidence" value="ECO:0007669"/>
    <property type="project" value="UniProtKB-UniRule"/>
</dbReference>
<dbReference type="GO" id="GO:0019674">
    <property type="term" value="P:NAD metabolic process"/>
    <property type="evidence" value="ECO:0007669"/>
    <property type="project" value="InterPro"/>
</dbReference>
<dbReference type="GO" id="GO:0006741">
    <property type="term" value="P:NADP biosynthetic process"/>
    <property type="evidence" value="ECO:0007669"/>
    <property type="project" value="UniProtKB-UniRule"/>
</dbReference>
<dbReference type="FunFam" id="2.60.200.30:FF:000001">
    <property type="entry name" value="NAD kinase"/>
    <property type="match status" value="1"/>
</dbReference>
<dbReference type="FunFam" id="3.40.50.10330:FF:000004">
    <property type="entry name" value="NAD kinase"/>
    <property type="match status" value="1"/>
</dbReference>
<dbReference type="Gene3D" id="3.40.50.10330">
    <property type="entry name" value="Probable inorganic polyphosphate/atp-NAD kinase, domain 1"/>
    <property type="match status" value="1"/>
</dbReference>
<dbReference type="Gene3D" id="2.60.200.30">
    <property type="entry name" value="Probable inorganic polyphosphate/atp-NAD kinase, domain 2"/>
    <property type="match status" value="1"/>
</dbReference>
<dbReference type="HAMAP" id="MF_00361">
    <property type="entry name" value="NAD_kinase"/>
    <property type="match status" value="1"/>
</dbReference>
<dbReference type="InterPro" id="IPR017438">
    <property type="entry name" value="ATP-NAD_kinase_N"/>
</dbReference>
<dbReference type="InterPro" id="IPR017437">
    <property type="entry name" value="ATP-NAD_kinase_PpnK-typ_C"/>
</dbReference>
<dbReference type="InterPro" id="IPR016064">
    <property type="entry name" value="NAD/diacylglycerol_kinase_sf"/>
</dbReference>
<dbReference type="InterPro" id="IPR002504">
    <property type="entry name" value="NADK"/>
</dbReference>
<dbReference type="NCBIfam" id="NF002306">
    <property type="entry name" value="PRK01231.1"/>
    <property type="match status" value="1"/>
</dbReference>
<dbReference type="NCBIfam" id="NF002893">
    <property type="entry name" value="PRK03378.1"/>
    <property type="match status" value="1"/>
</dbReference>
<dbReference type="PANTHER" id="PTHR20275">
    <property type="entry name" value="NAD KINASE"/>
    <property type="match status" value="1"/>
</dbReference>
<dbReference type="PANTHER" id="PTHR20275:SF0">
    <property type="entry name" value="NAD KINASE"/>
    <property type="match status" value="1"/>
</dbReference>
<dbReference type="Pfam" id="PF01513">
    <property type="entry name" value="NAD_kinase"/>
    <property type="match status" value="1"/>
</dbReference>
<dbReference type="Pfam" id="PF20143">
    <property type="entry name" value="NAD_kinase_C"/>
    <property type="match status" value="1"/>
</dbReference>
<dbReference type="SUPFAM" id="SSF111331">
    <property type="entry name" value="NAD kinase/diacylglycerol kinase-like"/>
    <property type="match status" value="1"/>
</dbReference>